<name>RTC1_CANDC</name>
<sequence length="1098" mass="122339">MSQPNSQGQSNLAKFAFNIYGTLSTNSSTPQSHEISPSSSLGSSRSNKQTNQYSSQETNNNRLSYYCEKEIMSLSQLNYPLSIGGYNGDLQHHVVIGGKNYLRLLCVSETQQRIISDINLLESKSIYNSRATNKLINVNTIKTYADTIAAGLSNGVVLIYRVSPNGQSKVVGKYSDHSRTINSLDFIDSENQLLSGSQDGTIKLWDLRSSSTKPVMTIQANLHSDPIRACQYSRHSAVRNKICVLSVHDSGALCKFDLRTKNGGKVYSPEKKWNLHTGPVLSLHIHPEKEYVVTGGRDKRISVFNYGDGQSRNTPDSLINTYGPVVKVRWSTYANTKEIVEEFEENQQPNPNPLYNYDIACSYLNDDPTIAIYNLGRKFIPKQIIHSKKPVQNFIWAQNNSKSRKIWTLSKPNSFNSYNLYGLDDSDVSRPIEDLSNVAMTWDNNNDFCAVSQARYDYDLESFGNAINETYEDNYDTERNCSLDNEEFVHSQANSLTASPIEKPQLTRSMTYNPVQSFSTFSPAPVARTATGFLQNEPVTPSSSSSIPNMHLSSSRPKLTRNTSQTTQDSSSSQLSSVIPPPSSSQTYSSPQYKRNQSSRCLNTPAYVIPVSIPVPSNDEYVFQKLSSESLVNIPDGFTLVDVCLINASVAASVNNNRTSQVWKLLAVSIQEEFESGSKLRRILGPETETVSKIPQEVHESLAKTNEALSSDIAKSNSVSSVLGNFVESFKSTSTSGSQFGKQNDKDDRKLQNKNSSGNLMDMINKASRNSSFSTTSFRLKEQERREHELRNTQNFRDENEKVSTHSKSAPISISSHPEDLDDENMSATNSAGLKSSPPSVGVSIPSTRTFSSSLASSPKSIRIMNGVNSNVARSQPSPPVQTWLKQRNFDVSNGVTMMGTSGLSLALKRNKTNEEGCEFVKVWKFKSLLRKSLDYAALQGDIIFCSTVALLFYDIVPDVISQFECLEWLSIYIEILQRKRLFVNAINVIKCATADIQEKLQKLYCSDLSLRFYCSRCQALLVNDKSKFSGKGEFGYWYCDECSRLQSQCVYCNEPCKGLAVTVGLKCGHQGHFGCLKEWFIEDQNTECPGGCDYQVI</sequence>
<protein>
    <recommendedName>
        <fullName>Restriction of telomere capping protein 1</fullName>
    </recommendedName>
</protein>
<keyword id="KW-0479">Metal-binding</keyword>
<keyword id="KW-0677">Repeat</keyword>
<keyword id="KW-0926">Vacuole</keyword>
<keyword id="KW-0853">WD repeat</keyword>
<keyword id="KW-0862">Zinc</keyword>
<keyword id="KW-0863">Zinc-finger</keyword>
<reference key="1">
    <citation type="journal article" date="2009" name="Genome Res.">
        <title>Comparative genomics of the fungal pathogens Candida dubliniensis and Candida albicans.</title>
        <authorList>
            <person name="Jackson A.P."/>
            <person name="Gamble J.A."/>
            <person name="Yeomans T."/>
            <person name="Moran G.P."/>
            <person name="Saunders D."/>
            <person name="Harris D."/>
            <person name="Aslett M."/>
            <person name="Barrell J.F."/>
            <person name="Butler G."/>
            <person name="Citiulo F."/>
            <person name="Coleman D.C."/>
            <person name="de Groot P.W.J."/>
            <person name="Goodwin T.J."/>
            <person name="Quail M.A."/>
            <person name="McQuillan J."/>
            <person name="Munro C.A."/>
            <person name="Pain A."/>
            <person name="Poulter R.T."/>
            <person name="Rajandream M.A."/>
            <person name="Renauld H."/>
            <person name="Spiering M.J."/>
            <person name="Tivey A."/>
            <person name="Gow N.A.R."/>
            <person name="Barrell B."/>
            <person name="Sullivan D.J."/>
            <person name="Berriman M."/>
        </authorList>
    </citation>
    <scope>NUCLEOTIDE SEQUENCE [LARGE SCALE GENOMIC DNA]</scope>
    <source>
        <strain>CD36 / ATCC MYA-646 / CBS 7987 / NCPF 3949 / NRRL Y-17841</strain>
    </source>
</reference>
<accession>B9WN49</accession>
<organism>
    <name type="scientific">Candida dubliniensis (strain CD36 / ATCC MYA-646 / CBS 7987 / NCPF 3949 / NRRL Y-17841)</name>
    <name type="common">Yeast</name>
    <dbReference type="NCBI Taxonomy" id="573826"/>
    <lineage>
        <taxon>Eukaryota</taxon>
        <taxon>Fungi</taxon>
        <taxon>Dikarya</taxon>
        <taxon>Ascomycota</taxon>
        <taxon>Saccharomycotina</taxon>
        <taxon>Pichiomycetes</taxon>
        <taxon>Debaryomycetaceae</taxon>
        <taxon>Candida/Lodderomyces clade</taxon>
        <taxon>Candida</taxon>
    </lineage>
</organism>
<feature type="chain" id="PRO_0000408779" description="Restriction of telomere capping protein 1">
    <location>
        <begin position="1"/>
        <end position="1098"/>
    </location>
</feature>
<feature type="repeat" description="WD 1">
    <location>
        <begin position="131"/>
        <end position="170"/>
    </location>
</feature>
<feature type="repeat" description="WD 2">
    <location>
        <begin position="176"/>
        <end position="215"/>
    </location>
</feature>
<feature type="repeat" description="WD 3">
    <location>
        <begin position="222"/>
        <end position="266"/>
    </location>
</feature>
<feature type="repeat" description="WD 4">
    <location>
        <begin position="275"/>
        <end position="314"/>
    </location>
</feature>
<feature type="repeat" description="WD 5">
    <location>
        <begin position="367"/>
        <end position="417"/>
    </location>
</feature>
<feature type="repeat" description="WD 6">
    <location>
        <begin position="432"/>
        <end position="473"/>
    </location>
</feature>
<feature type="repeat" description="WD 7">
    <location>
        <begin position="635"/>
        <end position="673"/>
    </location>
</feature>
<feature type="repeat" description="WD 8">
    <location>
        <begin position="891"/>
        <end position="934"/>
    </location>
</feature>
<feature type="zinc finger region" description="RING-type; degenerate" evidence="2">
    <location>
        <begin position="1050"/>
        <end position="1093"/>
    </location>
</feature>
<feature type="region of interest" description="Disordered" evidence="3">
    <location>
        <begin position="26"/>
        <end position="57"/>
    </location>
</feature>
<feature type="region of interest" description="Disordered" evidence="3">
    <location>
        <begin position="535"/>
        <end position="597"/>
    </location>
</feature>
<feature type="region of interest" description="Disordered" evidence="3">
    <location>
        <begin position="731"/>
        <end position="843"/>
    </location>
</feature>
<feature type="compositionally biased region" description="Low complexity" evidence="3">
    <location>
        <begin position="32"/>
        <end position="46"/>
    </location>
</feature>
<feature type="compositionally biased region" description="Polar residues" evidence="3">
    <location>
        <begin position="47"/>
        <end position="57"/>
    </location>
</feature>
<feature type="compositionally biased region" description="Polar residues" evidence="3">
    <location>
        <begin position="535"/>
        <end position="562"/>
    </location>
</feature>
<feature type="compositionally biased region" description="Low complexity" evidence="3">
    <location>
        <begin position="563"/>
        <end position="593"/>
    </location>
</feature>
<feature type="compositionally biased region" description="Polar residues" evidence="3">
    <location>
        <begin position="731"/>
        <end position="742"/>
    </location>
</feature>
<feature type="compositionally biased region" description="Low complexity" evidence="3">
    <location>
        <begin position="768"/>
        <end position="778"/>
    </location>
</feature>
<feature type="compositionally biased region" description="Basic and acidic residues" evidence="3">
    <location>
        <begin position="779"/>
        <end position="804"/>
    </location>
</feature>
<feature type="compositionally biased region" description="Polar residues" evidence="3">
    <location>
        <begin position="806"/>
        <end position="816"/>
    </location>
</feature>
<proteinExistence type="inferred from homology"/>
<comment type="function">
    <text evidence="1">May be involved in a process influencing telomere capping.</text>
</comment>
<comment type="subcellular location">
    <subcellularLocation>
        <location evidence="1">Vacuole</location>
    </subcellularLocation>
</comment>
<comment type="similarity">
    <text evidence="4">Belongs to the WD repeat RTC1 family.</text>
</comment>
<evidence type="ECO:0000250" key="1"/>
<evidence type="ECO:0000255" key="2">
    <source>
        <dbReference type="PROSITE-ProRule" id="PRU00175"/>
    </source>
</evidence>
<evidence type="ECO:0000256" key="3">
    <source>
        <dbReference type="SAM" id="MobiDB-lite"/>
    </source>
</evidence>
<evidence type="ECO:0000305" key="4"/>
<dbReference type="EMBL" id="FM992695">
    <property type="protein sequence ID" value="CAX40516.1"/>
    <property type="molecule type" value="Genomic_DNA"/>
</dbReference>
<dbReference type="RefSeq" id="XP_002422508.1">
    <property type="nucleotide sequence ID" value="XM_002422463.1"/>
</dbReference>
<dbReference type="GeneID" id="8050233"/>
<dbReference type="KEGG" id="cdu:CD36_35350"/>
<dbReference type="CGD" id="CAL0000159868">
    <property type="gene designation" value="Cd36_35350"/>
</dbReference>
<dbReference type="VEuPathDB" id="FungiDB:CD36_35350"/>
<dbReference type="eggNOG" id="KOG0269">
    <property type="taxonomic scope" value="Eukaryota"/>
</dbReference>
<dbReference type="HOGENOM" id="CLU_008512_0_0_1"/>
<dbReference type="OrthoDB" id="60955at2759"/>
<dbReference type="Proteomes" id="UP000002605">
    <property type="component" value="Chromosome R"/>
</dbReference>
<dbReference type="GO" id="GO:0005829">
    <property type="term" value="C:cytosol"/>
    <property type="evidence" value="ECO:0007669"/>
    <property type="project" value="TreeGrafter"/>
</dbReference>
<dbReference type="GO" id="GO:0061700">
    <property type="term" value="C:GATOR2 complex"/>
    <property type="evidence" value="ECO:0007669"/>
    <property type="project" value="TreeGrafter"/>
</dbReference>
<dbReference type="GO" id="GO:0005774">
    <property type="term" value="C:vacuolar membrane"/>
    <property type="evidence" value="ECO:0007669"/>
    <property type="project" value="TreeGrafter"/>
</dbReference>
<dbReference type="GO" id="GO:0008270">
    <property type="term" value="F:zinc ion binding"/>
    <property type="evidence" value="ECO:0007669"/>
    <property type="project" value="UniProtKB-KW"/>
</dbReference>
<dbReference type="GO" id="GO:0016239">
    <property type="term" value="P:positive regulation of macroautophagy"/>
    <property type="evidence" value="ECO:0007669"/>
    <property type="project" value="TreeGrafter"/>
</dbReference>
<dbReference type="GO" id="GO:1904263">
    <property type="term" value="P:positive regulation of TORC1 signaling"/>
    <property type="evidence" value="ECO:0007669"/>
    <property type="project" value="TreeGrafter"/>
</dbReference>
<dbReference type="CDD" id="cd16488">
    <property type="entry name" value="mRING-H2-C3H3C2_Mio-like"/>
    <property type="match status" value="1"/>
</dbReference>
<dbReference type="Gene3D" id="2.130.10.10">
    <property type="entry name" value="YVTN repeat-like/Quinoprotein amine dehydrogenase"/>
    <property type="match status" value="1"/>
</dbReference>
<dbReference type="InterPro" id="IPR015943">
    <property type="entry name" value="WD40/YVTN_repeat-like_dom_sf"/>
</dbReference>
<dbReference type="InterPro" id="IPR019775">
    <property type="entry name" value="WD40_repeat_CS"/>
</dbReference>
<dbReference type="InterPro" id="IPR036322">
    <property type="entry name" value="WD40_repeat_dom_sf"/>
</dbReference>
<dbReference type="InterPro" id="IPR001680">
    <property type="entry name" value="WD40_rpt"/>
</dbReference>
<dbReference type="InterPro" id="IPR037590">
    <property type="entry name" value="WDR24"/>
</dbReference>
<dbReference type="InterPro" id="IPR049566">
    <property type="entry name" value="WDR59_RTC1-like_RING_Znf"/>
</dbReference>
<dbReference type="InterPro" id="IPR001841">
    <property type="entry name" value="Znf_RING"/>
</dbReference>
<dbReference type="PANTHER" id="PTHR46200">
    <property type="entry name" value="GATOR COMPLEX PROTEIN WDR24"/>
    <property type="match status" value="1"/>
</dbReference>
<dbReference type="PANTHER" id="PTHR46200:SF1">
    <property type="entry name" value="GATOR COMPLEX PROTEIN WDR24"/>
    <property type="match status" value="1"/>
</dbReference>
<dbReference type="Pfam" id="PF00400">
    <property type="entry name" value="WD40"/>
    <property type="match status" value="2"/>
</dbReference>
<dbReference type="Pfam" id="PF17120">
    <property type="entry name" value="zf-RING_16"/>
    <property type="match status" value="1"/>
</dbReference>
<dbReference type="SMART" id="SM00320">
    <property type="entry name" value="WD40"/>
    <property type="match status" value="3"/>
</dbReference>
<dbReference type="SUPFAM" id="SSF50978">
    <property type="entry name" value="WD40 repeat-like"/>
    <property type="match status" value="1"/>
</dbReference>
<dbReference type="PROSITE" id="PS00678">
    <property type="entry name" value="WD_REPEATS_1"/>
    <property type="match status" value="1"/>
</dbReference>
<dbReference type="PROSITE" id="PS50082">
    <property type="entry name" value="WD_REPEATS_2"/>
    <property type="match status" value="2"/>
</dbReference>
<dbReference type="PROSITE" id="PS50294">
    <property type="entry name" value="WD_REPEATS_REGION"/>
    <property type="match status" value="1"/>
</dbReference>
<dbReference type="PROSITE" id="PS50089">
    <property type="entry name" value="ZF_RING_2"/>
    <property type="match status" value="1"/>
</dbReference>
<gene>
    <name type="primary">RTC1</name>
    <name type="ORF">CD36_35350</name>
</gene>